<keyword id="KW-0963">Cytoplasm</keyword>
<keyword id="KW-0396">Initiation factor</keyword>
<keyword id="KW-0648">Protein biosynthesis</keyword>
<keyword id="KW-1185">Reference proteome</keyword>
<organism>
    <name type="scientific">Xenopus tropicalis</name>
    <name type="common">Western clawed frog</name>
    <name type="synonym">Silurana tropicalis</name>
    <dbReference type="NCBI Taxonomy" id="8364"/>
    <lineage>
        <taxon>Eukaryota</taxon>
        <taxon>Metazoa</taxon>
        <taxon>Chordata</taxon>
        <taxon>Craniata</taxon>
        <taxon>Vertebrata</taxon>
        <taxon>Euteleostomi</taxon>
        <taxon>Amphibia</taxon>
        <taxon>Batrachia</taxon>
        <taxon>Anura</taxon>
        <taxon>Pipoidea</taxon>
        <taxon>Pipidae</taxon>
        <taxon>Xenopodinae</taxon>
        <taxon>Xenopus</taxon>
        <taxon>Silurana</taxon>
    </lineage>
</organism>
<reference key="1">
    <citation type="submission" date="2003-11" db="EMBL/GenBank/DDBJ databases">
        <authorList>
            <consortium name="NIH - Xenopus Gene Collection (XGC) project"/>
        </authorList>
    </citation>
    <scope>NUCLEOTIDE SEQUENCE [LARGE SCALE MRNA]</scope>
    <source>
        <tissue>Embryo</tissue>
    </source>
</reference>
<protein>
    <recommendedName>
        <fullName evidence="1">Eukaryotic translation initiation factor 3 subunit L</fullName>
        <shortName evidence="1">eIF3l</shortName>
    </recommendedName>
    <alternativeName>
        <fullName evidence="1">Eukaryotic translation initiation factor 3 subunit 6-interacting protein</fullName>
    </alternativeName>
    <alternativeName>
        <fullName evidence="1">Eukaryotic translation initiation factor 3 subunit E-interacting protein</fullName>
    </alternativeName>
</protein>
<comment type="function">
    <text evidence="1">Component of the eukaryotic translation initiation factor 3 (eIF-3) complex, which is involved in protein synthesis of a specialized repertoire of mRNAs and, together with other initiation factors, stimulates binding of mRNA and methionyl-tRNAi to the 40S ribosome. The eIF-3 complex specifically targets and initiates translation of a subset of mRNAs involved in cell proliferation.</text>
</comment>
<comment type="subunit">
    <text evidence="1">Component of the eukaryotic translation initiation factor 3 (eIF-3) complex, which is composed of 13 subunits: eif3a, eif3b, eif3c, eif3d, eif3e, eif3f, eif3g, eif3h, eif3i, eif3j, eif3k, eif3l and eif3m.</text>
</comment>
<comment type="subcellular location">
    <subcellularLocation>
        <location evidence="1">Cytoplasm</location>
    </subcellularLocation>
</comment>
<comment type="similarity">
    <text evidence="1">Belongs to the eIF-3 subunit L family.</text>
</comment>
<evidence type="ECO:0000255" key="1">
    <source>
        <dbReference type="HAMAP-Rule" id="MF_03011"/>
    </source>
</evidence>
<evidence type="ECO:0000255" key="2">
    <source>
        <dbReference type="PROSITE-ProRule" id="PRU01185"/>
    </source>
</evidence>
<gene>
    <name type="primary">eif3l</name>
    <name type="synonym">eif3eip</name>
    <name type="synonym">eif3s6ip</name>
</gene>
<proteinExistence type="evidence at transcript level"/>
<name>EIF3L_XENTR</name>
<sequence>MSYANEEFEGSYDPYNYQADYDMHTGDPKQDLAYERQYEQQTYQVIPEVIKNFIQYFHKTVSDLIDQKVYELQASRVSSDVIDQKVYEIQDIYENSWTKLTERFFKNSPWPEAEAIAPQVGNDAVFLILYKELYYRHIYAKVSGGPTLEQRFESYYNYCNLFNYILNADGPAPLELPNQWLWDIIDEFIYQFQSFSQYRCKTAKKSEEEIEFLRSNPKIWNVHSVLNVLHSLVDKSNINRQLEVYTSGGDPESVAGEYGRHSLYKMLGYFSLVGLLRLHSLLGDYYQAIKVLENIELNKKSMYSRVPECQVTTYYYVGFAYLMMRRYQDAIRVFANILLYIQRTKSMFQRTTYKYEMINKQNEQMHGLLAIALTMYPMRIDESIHTQLREKYGDKMLRMQKGDAQIYEELFNYACPKFLSPVVPNYDNVHPNYHKEPYLQQLKVFLDEVQQQAQLSTIRSFLKLYTTMPVAKLAGFLDLPEQEFRIQLLVFKHKMKNLVWTSGISALEGEFQSASEVDFYIDKDMIHIADTKVARRYGDFFIRQIHKFEELNKTLKKMSQKP</sequence>
<accession>Q6P878</accession>
<dbReference type="EMBL" id="BC061351">
    <property type="protein sequence ID" value="AAH61351.1"/>
    <property type="molecule type" value="mRNA"/>
</dbReference>
<dbReference type="RefSeq" id="NP_988980.1">
    <property type="nucleotide sequence ID" value="NM_203649.1"/>
</dbReference>
<dbReference type="SMR" id="Q6P878"/>
<dbReference type="FunCoup" id="Q6P878">
    <property type="interactions" value="2078"/>
</dbReference>
<dbReference type="STRING" id="8364.ENSXETP00000041276"/>
<dbReference type="PaxDb" id="8364-ENSXETP00000056993"/>
<dbReference type="GeneID" id="394577"/>
<dbReference type="KEGG" id="xtr:394577"/>
<dbReference type="AGR" id="Xenbase:XB-GENE-493733"/>
<dbReference type="CTD" id="51386"/>
<dbReference type="Xenbase" id="XB-GENE-493733">
    <property type="gene designation" value="eif3l"/>
</dbReference>
<dbReference type="eggNOG" id="KOG3677">
    <property type="taxonomic scope" value="Eukaryota"/>
</dbReference>
<dbReference type="HOGENOM" id="CLU_029210_0_1_1"/>
<dbReference type="InParanoid" id="Q6P878"/>
<dbReference type="OMA" id="AGWFIRN"/>
<dbReference type="OrthoDB" id="15082at2759"/>
<dbReference type="PhylomeDB" id="Q6P878"/>
<dbReference type="TreeFam" id="TF101523"/>
<dbReference type="Reactome" id="R-XTR-156827">
    <property type="pathway name" value="L13a-mediated translational silencing of Ceruloplasmin expression"/>
</dbReference>
<dbReference type="Reactome" id="R-XTR-72689">
    <property type="pathway name" value="Formation of a pool of free 40S subunits"/>
</dbReference>
<dbReference type="Reactome" id="R-XTR-72695">
    <property type="pathway name" value="Formation of the ternary complex, and subsequently, the 43S complex"/>
</dbReference>
<dbReference type="Reactome" id="R-XTR-72702">
    <property type="pathway name" value="Ribosomal scanning and start codon recognition"/>
</dbReference>
<dbReference type="Proteomes" id="UP000008143">
    <property type="component" value="Chromosome 4"/>
</dbReference>
<dbReference type="Bgee" id="ENSXETG00000027274">
    <property type="expression patterns" value="Expressed in skeletal muscle tissue and 24 other cell types or tissues"/>
</dbReference>
<dbReference type="GO" id="GO:0016282">
    <property type="term" value="C:eukaryotic 43S preinitiation complex"/>
    <property type="evidence" value="ECO:0007669"/>
    <property type="project" value="UniProtKB-UniRule"/>
</dbReference>
<dbReference type="GO" id="GO:0033290">
    <property type="term" value="C:eukaryotic 48S preinitiation complex"/>
    <property type="evidence" value="ECO:0007669"/>
    <property type="project" value="UniProtKB-UniRule"/>
</dbReference>
<dbReference type="GO" id="GO:0005852">
    <property type="term" value="C:eukaryotic translation initiation factor 3 complex"/>
    <property type="evidence" value="ECO:0000250"/>
    <property type="project" value="UniProtKB"/>
</dbReference>
<dbReference type="GO" id="GO:0003743">
    <property type="term" value="F:translation initiation factor activity"/>
    <property type="evidence" value="ECO:0007669"/>
    <property type="project" value="UniProtKB-UniRule"/>
</dbReference>
<dbReference type="GO" id="GO:0001732">
    <property type="term" value="P:formation of cytoplasmic translation initiation complex"/>
    <property type="evidence" value="ECO:0007669"/>
    <property type="project" value="UniProtKB-UniRule"/>
</dbReference>
<dbReference type="GO" id="GO:0006413">
    <property type="term" value="P:translational initiation"/>
    <property type="evidence" value="ECO:0000250"/>
    <property type="project" value="UniProtKB"/>
</dbReference>
<dbReference type="HAMAP" id="MF_03011">
    <property type="entry name" value="eIF3l"/>
    <property type="match status" value="1"/>
</dbReference>
<dbReference type="InterPro" id="IPR019382">
    <property type="entry name" value="eIF3l"/>
</dbReference>
<dbReference type="InterPro" id="IPR000717">
    <property type="entry name" value="PCI_dom"/>
</dbReference>
<dbReference type="InterPro" id="IPR011990">
    <property type="entry name" value="TPR-like_helical_dom_sf"/>
</dbReference>
<dbReference type="PANTHER" id="PTHR13242">
    <property type="entry name" value="EUKARYOTIC TRANSLATION INITIATION FACTOR 3"/>
    <property type="match status" value="1"/>
</dbReference>
<dbReference type="PANTHER" id="PTHR13242:SF0">
    <property type="entry name" value="EUKARYOTIC TRANSLATION INITIATION FACTOR 3 SUBUNIT L"/>
    <property type="match status" value="1"/>
</dbReference>
<dbReference type="Pfam" id="PF10255">
    <property type="entry name" value="Paf67"/>
    <property type="match status" value="1"/>
</dbReference>
<dbReference type="SUPFAM" id="SSF48452">
    <property type="entry name" value="TPR-like"/>
    <property type="match status" value="1"/>
</dbReference>
<dbReference type="PROSITE" id="PS50250">
    <property type="entry name" value="PCI"/>
    <property type="match status" value="1"/>
</dbReference>
<feature type="chain" id="PRO_0000297497" description="Eukaryotic translation initiation factor 3 subunit L">
    <location>
        <begin position="1"/>
        <end position="562"/>
    </location>
</feature>
<feature type="domain" description="PCI" evidence="2">
    <location>
        <begin position="329"/>
        <end position="535"/>
    </location>
</feature>